<sequence>MDIREILKVLPHRYPFLLVDRVLEADERRFKALKNVTFNEPHFQGHFPGHPVMPGVLILEAMAQAAVGALVRQPGFPQGGLAFLAGVEGARFRRPVYPGDTLILEGELLAFRRGVGKVAVRALVEGEERASATLTFVLQGAS</sequence>
<reference key="1">
    <citation type="submission" date="2004-11" db="EMBL/GenBank/DDBJ databases">
        <title>Complete genome sequence of Thermus thermophilus HB8.</title>
        <authorList>
            <person name="Masui R."/>
            <person name="Kurokawa K."/>
            <person name="Nakagawa N."/>
            <person name="Tokunaga F."/>
            <person name="Koyama Y."/>
            <person name="Shibata T."/>
            <person name="Oshima T."/>
            <person name="Yokoyama S."/>
            <person name="Yasunaga T."/>
            <person name="Kuramitsu S."/>
        </authorList>
    </citation>
    <scope>NUCLEOTIDE SEQUENCE [LARGE SCALE GENOMIC DNA]</scope>
    <source>
        <strain>ATCC 27634 / DSM 579 / HB8</strain>
    </source>
</reference>
<proteinExistence type="inferred from homology"/>
<name>FABZ_THET8</name>
<comment type="function">
    <text evidence="1">Involved in unsaturated fatty acids biosynthesis. Catalyzes the dehydration of short chain beta-hydroxyacyl-ACPs and long chain saturated and unsaturated beta-hydroxyacyl-ACPs.</text>
</comment>
<comment type="catalytic activity">
    <reaction evidence="1">
        <text>a (3R)-hydroxyacyl-[ACP] = a (2E)-enoyl-[ACP] + H2O</text>
        <dbReference type="Rhea" id="RHEA:13097"/>
        <dbReference type="Rhea" id="RHEA-COMP:9925"/>
        <dbReference type="Rhea" id="RHEA-COMP:9945"/>
        <dbReference type="ChEBI" id="CHEBI:15377"/>
        <dbReference type="ChEBI" id="CHEBI:78784"/>
        <dbReference type="ChEBI" id="CHEBI:78827"/>
        <dbReference type="EC" id="4.2.1.59"/>
    </reaction>
</comment>
<comment type="subcellular location">
    <subcellularLocation>
        <location evidence="1">Cytoplasm</location>
    </subcellularLocation>
</comment>
<comment type="similarity">
    <text evidence="1">Belongs to the thioester dehydratase family. FabZ subfamily.</text>
</comment>
<keyword id="KW-0963">Cytoplasm</keyword>
<keyword id="KW-0441">Lipid A biosynthesis</keyword>
<keyword id="KW-0444">Lipid biosynthesis</keyword>
<keyword id="KW-0443">Lipid metabolism</keyword>
<keyword id="KW-0456">Lyase</keyword>
<keyword id="KW-1185">Reference proteome</keyword>
<protein>
    <recommendedName>
        <fullName evidence="1">3-hydroxyacyl-[acyl-carrier-protein] dehydratase FabZ</fullName>
        <ecNumber evidence="1">4.2.1.59</ecNumber>
    </recommendedName>
    <alternativeName>
        <fullName evidence="1">(3R)-hydroxymyristoyl-[acyl-carrier-protein] dehydratase</fullName>
        <shortName evidence="1">(3R)-hydroxymyristoyl-ACP dehydrase</shortName>
    </alternativeName>
    <alternativeName>
        <fullName evidence="1">Beta-hydroxyacyl-ACP dehydratase</fullName>
    </alternativeName>
</protein>
<dbReference type="EC" id="4.2.1.59" evidence="1"/>
<dbReference type="EMBL" id="AP008226">
    <property type="protein sequence ID" value="BAD71638.1"/>
    <property type="molecule type" value="Genomic_DNA"/>
</dbReference>
<dbReference type="RefSeq" id="WP_011173839.1">
    <property type="nucleotide sequence ID" value="NC_006461.1"/>
</dbReference>
<dbReference type="RefSeq" id="YP_145081.1">
    <property type="nucleotide sequence ID" value="NC_006461.1"/>
</dbReference>
<dbReference type="SMR" id="Q5SHB5"/>
<dbReference type="EnsemblBacteria" id="BAD71638">
    <property type="protein sequence ID" value="BAD71638"/>
    <property type="gene ID" value="BAD71638"/>
</dbReference>
<dbReference type="GeneID" id="3168509"/>
<dbReference type="KEGG" id="ttj:TTHA1815"/>
<dbReference type="PATRIC" id="fig|300852.9.peg.1786"/>
<dbReference type="eggNOG" id="COG0764">
    <property type="taxonomic scope" value="Bacteria"/>
</dbReference>
<dbReference type="HOGENOM" id="CLU_078912_1_2_0"/>
<dbReference type="PhylomeDB" id="Q5SHB5"/>
<dbReference type="Proteomes" id="UP000000532">
    <property type="component" value="Chromosome"/>
</dbReference>
<dbReference type="GO" id="GO:0005737">
    <property type="term" value="C:cytoplasm"/>
    <property type="evidence" value="ECO:0007669"/>
    <property type="project" value="UniProtKB-SubCell"/>
</dbReference>
<dbReference type="GO" id="GO:0016020">
    <property type="term" value="C:membrane"/>
    <property type="evidence" value="ECO:0007669"/>
    <property type="project" value="GOC"/>
</dbReference>
<dbReference type="GO" id="GO:0019171">
    <property type="term" value="F:(3R)-hydroxyacyl-[acyl-carrier-protein] dehydratase activity"/>
    <property type="evidence" value="ECO:0007669"/>
    <property type="project" value="UniProtKB-EC"/>
</dbReference>
<dbReference type="GO" id="GO:0006633">
    <property type="term" value="P:fatty acid biosynthetic process"/>
    <property type="evidence" value="ECO:0007669"/>
    <property type="project" value="UniProtKB-UniRule"/>
</dbReference>
<dbReference type="GO" id="GO:0009245">
    <property type="term" value="P:lipid A biosynthetic process"/>
    <property type="evidence" value="ECO:0007669"/>
    <property type="project" value="UniProtKB-UniRule"/>
</dbReference>
<dbReference type="CDD" id="cd01288">
    <property type="entry name" value="FabZ"/>
    <property type="match status" value="1"/>
</dbReference>
<dbReference type="FunFam" id="3.10.129.10:FF:000001">
    <property type="entry name" value="3-hydroxyacyl-[acyl-carrier-protein] dehydratase FabZ"/>
    <property type="match status" value="1"/>
</dbReference>
<dbReference type="Gene3D" id="3.10.129.10">
    <property type="entry name" value="Hotdog Thioesterase"/>
    <property type="match status" value="1"/>
</dbReference>
<dbReference type="HAMAP" id="MF_00406">
    <property type="entry name" value="FabZ"/>
    <property type="match status" value="1"/>
</dbReference>
<dbReference type="InterPro" id="IPR013114">
    <property type="entry name" value="FabA_FabZ"/>
</dbReference>
<dbReference type="InterPro" id="IPR010084">
    <property type="entry name" value="FabZ"/>
</dbReference>
<dbReference type="InterPro" id="IPR029069">
    <property type="entry name" value="HotDog_dom_sf"/>
</dbReference>
<dbReference type="NCBIfam" id="TIGR01750">
    <property type="entry name" value="fabZ"/>
    <property type="match status" value="1"/>
</dbReference>
<dbReference type="NCBIfam" id="NF000582">
    <property type="entry name" value="PRK00006.1"/>
    <property type="match status" value="1"/>
</dbReference>
<dbReference type="PANTHER" id="PTHR30272">
    <property type="entry name" value="3-HYDROXYACYL-[ACYL-CARRIER-PROTEIN] DEHYDRATASE"/>
    <property type="match status" value="1"/>
</dbReference>
<dbReference type="PANTHER" id="PTHR30272:SF1">
    <property type="entry name" value="3-HYDROXYACYL-[ACYL-CARRIER-PROTEIN] DEHYDRATASE"/>
    <property type="match status" value="1"/>
</dbReference>
<dbReference type="Pfam" id="PF07977">
    <property type="entry name" value="FabA"/>
    <property type="match status" value="1"/>
</dbReference>
<dbReference type="SUPFAM" id="SSF54637">
    <property type="entry name" value="Thioesterase/thiol ester dehydrase-isomerase"/>
    <property type="match status" value="1"/>
</dbReference>
<organism>
    <name type="scientific">Thermus thermophilus (strain ATCC 27634 / DSM 579 / HB8)</name>
    <dbReference type="NCBI Taxonomy" id="300852"/>
    <lineage>
        <taxon>Bacteria</taxon>
        <taxon>Thermotogati</taxon>
        <taxon>Deinococcota</taxon>
        <taxon>Deinococci</taxon>
        <taxon>Thermales</taxon>
        <taxon>Thermaceae</taxon>
        <taxon>Thermus</taxon>
    </lineage>
</organism>
<evidence type="ECO:0000255" key="1">
    <source>
        <dbReference type="HAMAP-Rule" id="MF_00406"/>
    </source>
</evidence>
<accession>Q5SHB5</accession>
<gene>
    <name evidence="1" type="primary">fabZ</name>
    <name type="ordered locus">TTHA1815</name>
</gene>
<feature type="chain" id="PRO_0000230843" description="3-hydroxyacyl-[acyl-carrier-protein] dehydratase FabZ">
    <location>
        <begin position="1"/>
        <end position="142"/>
    </location>
</feature>
<feature type="active site" evidence="1">
    <location>
        <position position="46"/>
    </location>
</feature>